<feature type="chain" id="PRO_1000004735" description="Phosphomethylpyrimidine synthase">
    <location>
        <begin position="1"/>
        <end position="622"/>
    </location>
</feature>
<feature type="region of interest" description="Disordered" evidence="2">
    <location>
        <begin position="109"/>
        <end position="130"/>
    </location>
</feature>
<feature type="binding site" evidence="1">
    <location>
        <position position="234"/>
    </location>
    <ligand>
        <name>substrate</name>
    </ligand>
</feature>
<feature type="binding site" evidence="1">
    <location>
        <position position="263"/>
    </location>
    <ligand>
        <name>substrate</name>
    </ligand>
</feature>
<feature type="binding site" evidence="1">
    <location>
        <position position="292"/>
    </location>
    <ligand>
        <name>substrate</name>
    </ligand>
</feature>
<feature type="binding site" evidence="1">
    <location>
        <position position="328"/>
    </location>
    <ligand>
        <name>substrate</name>
    </ligand>
</feature>
<feature type="binding site" evidence="1">
    <location>
        <begin position="348"/>
        <end position="350"/>
    </location>
    <ligand>
        <name>substrate</name>
    </ligand>
</feature>
<feature type="binding site" evidence="1">
    <location>
        <begin position="389"/>
        <end position="392"/>
    </location>
    <ligand>
        <name>substrate</name>
    </ligand>
</feature>
<feature type="binding site" evidence="1">
    <location>
        <position position="428"/>
    </location>
    <ligand>
        <name>substrate</name>
    </ligand>
</feature>
<feature type="binding site" evidence="1">
    <location>
        <position position="432"/>
    </location>
    <ligand>
        <name>Zn(2+)</name>
        <dbReference type="ChEBI" id="CHEBI:29105"/>
    </ligand>
</feature>
<feature type="binding site" evidence="1">
    <location>
        <position position="455"/>
    </location>
    <ligand>
        <name>substrate</name>
    </ligand>
</feature>
<feature type="binding site" evidence="1">
    <location>
        <position position="496"/>
    </location>
    <ligand>
        <name>Zn(2+)</name>
        <dbReference type="ChEBI" id="CHEBI:29105"/>
    </ligand>
</feature>
<feature type="binding site" evidence="1">
    <location>
        <position position="576"/>
    </location>
    <ligand>
        <name>[4Fe-4S] cluster</name>
        <dbReference type="ChEBI" id="CHEBI:49883"/>
        <note>4Fe-4S-S-AdoMet</note>
    </ligand>
</feature>
<feature type="binding site" evidence="1">
    <location>
        <position position="579"/>
    </location>
    <ligand>
        <name>[4Fe-4S] cluster</name>
        <dbReference type="ChEBI" id="CHEBI:49883"/>
        <note>4Fe-4S-S-AdoMet</note>
    </ligand>
</feature>
<feature type="binding site" evidence="1">
    <location>
        <position position="584"/>
    </location>
    <ligand>
        <name>[4Fe-4S] cluster</name>
        <dbReference type="ChEBI" id="CHEBI:49883"/>
        <note>4Fe-4S-S-AdoMet</note>
    </ligand>
</feature>
<accession>Q1LU45</accession>
<organism>
    <name type="scientific">Baumannia cicadellinicola subsp. Homalodisca coagulata</name>
    <dbReference type="NCBI Taxonomy" id="374463"/>
    <lineage>
        <taxon>Bacteria</taxon>
        <taxon>Pseudomonadati</taxon>
        <taxon>Pseudomonadota</taxon>
        <taxon>Gammaproteobacteria</taxon>
        <taxon>Candidatus Palibaumannia</taxon>
    </lineage>
</organism>
<reference key="1">
    <citation type="journal article" date="2006" name="PLoS Biol.">
        <title>Metabolic complementarity and genomics of the dual bacterial symbiosis of sharpshooters.</title>
        <authorList>
            <person name="Wu D."/>
            <person name="Daugherty S.C."/>
            <person name="Van Aken S.E."/>
            <person name="Pai G.H."/>
            <person name="Watkins K.L."/>
            <person name="Khouri H."/>
            <person name="Tallon L.J."/>
            <person name="Zaborsky J.M."/>
            <person name="Dunbar H.E."/>
            <person name="Tran P.L."/>
            <person name="Moran N.A."/>
            <person name="Eisen J.A."/>
        </authorList>
    </citation>
    <scope>NUCLEOTIDE SEQUENCE [LARGE SCALE GENOMIC DNA]</scope>
</reference>
<dbReference type="EC" id="4.1.99.17" evidence="1"/>
<dbReference type="EMBL" id="CP000238">
    <property type="protein sequence ID" value="ABF13936.1"/>
    <property type="molecule type" value="Genomic_DNA"/>
</dbReference>
<dbReference type="RefSeq" id="WP_011520252.1">
    <property type="nucleotide sequence ID" value="NC_007984.1"/>
</dbReference>
<dbReference type="SMR" id="Q1LU45"/>
<dbReference type="STRING" id="374463.BCI_0041"/>
<dbReference type="KEGG" id="bci:BCI_0041"/>
<dbReference type="HOGENOM" id="CLU_013181_2_1_6"/>
<dbReference type="OrthoDB" id="9805897at2"/>
<dbReference type="UniPathway" id="UPA00060"/>
<dbReference type="Proteomes" id="UP000002427">
    <property type="component" value="Chromosome"/>
</dbReference>
<dbReference type="GO" id="GO:0005829">
    <property type="term" value="C:cytosol"/>
    <property type="evidence" value="ECO:0007669"/>
    <property type="project" value="TreeGrafter"/>
</dbReference>
<dbReference type="GO" id="GO:0051539">
    <property type="term" value="F:4 iron, 4 sulfur cluster binding"/>
    <property type="evidence" value="ECO:0007669"/>
    <property type="project" value="UniProtKB-KW"/>
</dbReference>
<dbReference type="GO" id="GO:0016830">
    <property type="term" value="F:carbon-carbon lyase activity"/>
    <property type="evidence" value="ECO:0007669"/>
    <property type="project" value="InterPro"/>
</dbReference>
<dbReference type="GO" id="GO:0008270">
    <property type="term" value="F:zinc ion binding"/>
    <property type="evidence" value="ECO:0007669"/>
    <property type="project" value="UniProtKB-UniRule"/>
</dbReference>
<dbReference type="GO" id="GO:0009228">
    <property type="term" value="P:thiamine biosynthetic process"/>
    <property type="evidence" value="ECO:0007669"/>
    <property type="project" value="UniProtKB-KW"/>
</dbReference>
<dbReference type="GO" id="GO:0009229">
    <property type="term" value="P:thiamine diphosphate biosynthetic process"/>
    <property type="evidence" value="ECO:0007669"/>
    <property type="project" value="UniProtKB-UniRule"/>
</dbReference>
<dbReference type="FunFam" id="3.20.20.540:FF:000001">
    <property type="entry name" value="Phosphomethylpyrimidine synthase"/>
    <property type="match status" value="1"/>
</dbReference>
<dbReference type="Gene3D" id="6.10.250.620">
    <property type="match status" value="1"/>
</dbReference>
<dbReference type="Gene3D" id="3.20.20.540">
    <property type="entry name" value="Radical SAM ThiC family, central domain"/>
    <property type="match status" value="1"/>
</dbReference>
<dbReference type="HAMAP" id="MF_00089">
    <property type="entry name" value="ThiC"/>
    <property type="match status" value="1"/>
</dbReference>
<dbReference type="InterPro" id="IPR037509">
    <property type="entry name" value="ThiC"/>
</dbReference>
<dbReference type="InterPro" id="IPR025747">
    <property type="entry name" value="ThiC-associated_dom"/>
</dbReference>
<dbReference type="InterPro" id="IPR038521">
    <property type="entry name" value="ThiC/Bza_core_dom"/>
</dbReference>
<dbReference type="InterPro" id="IPR002817">
    <property type="entry name" value="ThiC/BzaA/B"/>
</dbReference>
<dbReference type="NCBIfam" id="NF006763">
    <property type="entry name" value="PRK09284.1"/>
    <property type="match status" value="1"/>
</dbReference>
<dbReference type="NCBIfam" id="NF009895">
    <property type="entry name" value="PRK13352.1"/>
    <property type="match status" value="1"/>
</dbReference>
<dbReference type="NCBIfam" id="TIGR00190">
    <property type="entry name" value="thiC"/>
    <property type="match status" value="1"/>
</dbReference>
<dbReference type="PANTHER" id="PTHR30557:SF1">
    <property type="entry name" value="PHOSPHOMETHYLPYRIMIDINE SYNTHASE, CHLOROPLASTIC"/>
    <property type="match status" value="1"/>
</dbReference>
<dbReference type="PANTHER" id="PTHR30557">
    <property type="entry name" value="THIAMINE BIOSYNTHESIS PROTEIN THIC"/>
    <property type="match status" value="1"/>
</dbReference>
<dbReference type="Pfam" id="PF13667">
    <property type="entry name" value="ThiC-associated"/>
    <property type="match status" value="1"/>
</dbReference>
<dbReference type="Pfam" id="PF01964">
    <property type="entry name" value="ThiC_Rad_SAM"/>
    <property type="match status" value="1"/>
</dbReference>
<dbReference type="SFLD" id="SFLDF00407">
    <property type="entry name" value="phosphomethylpyrimidine_syntha"/>
    <property type="match status" value="1"/>
</dbReference>
<dbReference type="SFLD" id="SFLDG01114">
    <property type="entry name" value="phosphomethylpyrimidine_syntha"/>
    <property type="match status" value="1"/>
</dbReference>
<dbReference type="SFLD" id="SFLDS00113">
    <property type="entry name" value="Radical_SAM_Phosphomethylpyrim"/>
    <property type="match status" value="1"/>
</dbReference>
<evidence type="ECO:0000255" key="1">
    <source>
        <dbReference type="HAMAP-Rule" id="MF_00089"/>
    </source>
</evidence>
<evidence type="ECO:0000256" key="2">
    <source>
        <dbReference type="SAM" id="MobiDB-lite"/>
    </source>
</evidence>
<sequence>MSRSSIPASRRVSRAKAQAFMDSLTGSSYFPNSRRIYLQGKTPSVHVPMREIKLHPTLIGKNGEHYEDNQPIPVYDTSGPYGDPTIAINVRTGLNRLREIWILARQDSEPISNNNNDRQSSDKQLSFTTNYNPRRASYGRCITQLHYARAGIITPEMEFIALRENMGRERISSNVLHQQHLGSNFGAKKADHITAEFVRQEVAAGRAIIPSNINHPESEPMIIGRNFLVKVNANIGNSAVTSSIEEEVEKLVWATRWGADTVMDLSTGSYIHETREWILRNSPVPIGTVPIYQALEKVNGVIENLNWDIFYETLLEQANQGVDYFTIHAGVLKRYVLLTASRLTGIVSRGGSIMAQWSLVHNQENFLYEHFSEICKLCAAYDIALSLGDGLRPGSVQDANDEAQFSELHTLGELTKIAWEYDVQVMIEGPGHIPLHMIERNMTDQLKYCHEAPFYTLGPLTTDIAPGYDHFTSGIGAALIGWFGCAMLCYVTPKEHLGLPNKEDVKQGLIAYKIAAHAADLAKGHPGAQIRDNAMSKARFEFRWEDQFNLALDPFTARMYHDETIPQTAGKLANFCSMCGPKFCSMKLSKKIRNYTNMKNIKTISNSFMNKLDNSGIKNADR</sequence>
<gene>
    <name evidence="1" type="primary">thiC</name>
    <name type="ordered locus">BCI_0041</name>
</gene>
<keyword id="KW-0004">4Fe-4S</keyword>
<keyword id="KW-0408">Iron</keyword>
<keyword id="KW-0411">Iron-sulfur</keyword>
<keyword id="KW-0456">Lyase</keyword>
<keyword id="KW-0479">Metal-binding</keyword>
<keyword id="KW-1185">Reference proteome</keyword>
<keyword id="KW-0949">S-adenosyl-L-methionine</keyword>
<keyword id="KW-0784">Thiamine biosynthesis</keyword>
<keyword id="KW-0862">Zinc</keyword>
<protein>
    <recommendedName>
        <fullName evidence="1">Phosphomethylpyrimidine synthase</fullName>
        <ecNumber evidence="1">4.1.99.17</ecNumber>
    </recommendedName>
    <alternativeName>
        <fullName evidence="1">Hydroxymethylpyrimidine phosphate synthase</fullName>
        <shortName evidence="1">HMP-P synthase</shortName>
        <shortName evidence="1">HMP-phosphate synthase</shortName>
        <shortName evidence="1">HMPP synthase</shortName>
    </alternativeName>
    <alternativeName>
        <fullName evidence="1">Thiamine biosynthesis protein ThiC</fullName>
    </alternativeName>
</protein>
<comment type="function">
    <text evidence="1">Catalyzes the synthesis of the hydroxymethylpyrimidine phosphate (HMP-P) moiety of thiamine from aminoimidazole ribotide (AIR) in a radical S-adenosyl-L-methionine (SAM)-dependent reaction.</text>
</comment>
<comment type="catalytic activity">
    <reaction evidence="1">
        <text>5-amino-1-(5-phospho-beta-D-ribosyl)imidazole + S-adenosyl-L-methionine = 4-amino-2-methyl-5-(phosphooxymethyl)pyrimidine + CO + 5'-deoxyadenosine + formate + L-methionine + 3 H(+)</text>
        <dbReference type="Rhea" id="RHEA:24840"/>
        <dbReference type="ChEBI" id="CHEBI:15378"/>
        <dbReference type="ChEBI" id="CHEBI:15740"/>
        <dbReference type="ChEBI" id="CHEBI:17245"/>
        <dbReference type="ChEBI" id="CHEBI:17319"/>
        <dbReference type="ChEBI" id="CHEBI:57844"/>
        <dbReference type="ChEBI" id="CHEBI:58354"/>
        <dbReference type="ChEBI" id="CHEBI:59789"/>
        <dbReference type="ChEBI" id="CHEBI:137981"/>
        <dbReference type="EC" id="4.1.99.17"/>
    </reaction>
</comment>
<comment type="cofactor">
    <cofactor evidence="1">
        <name>[4Fe-4S] cluster</name>
        <dbReference type="ChEBI" id="CHEBI:49883"/>
    </cofactor>
    <text evidence="1">Binds 1 [4Fe-4S] cluster per subunit. The cluster is coordinated with 3 cysteines and an exchangeable S-adenosyl-L-methionine.</text>
</comment>
<comment type="pathway">
    <text evidence="1">Cofactor biosynthesis; thiamine diphosphate biosynthesis.</text>
</comment>
<comment type="subunit">
    <text evidence="1">Homodimer.</text>
</comment>
<comment type="similarity">
    <text evidence="1">Belongs to the ThiC family.</text>
</comment>
<proteinExistence type="inferred from homology"/>
<name>THIC_BAUCH</name>